<keyword id="KW-1185">Reference proteome</keyword>
<sequence length="156" mass="18480">MKLYNEFINIAKTFNKELDIIPLLYGSLGLEKVTGLDFSPEDIDLLIPLIFLEEKWEKLKKVMELHGYKMVDLHEHEFKKTNTKIGISYIEDLKPFADVDYNNLEIFEDGGAKYHLLTIDDYLKIYKKSLLDGYRRRKKNHKDQSKINILNKLIRN</sequence>
<gene>
    <name type="primary">ynaI</name>
    <name type="ordered locus">BSU17560</name>
</gene>
<accession>P94487</accession>
<dbReference type="EMBL" id="U66480">
    <property type="protein sequence ID" value="AAB41088.1"/>
    <property type="status" value="ALT_FRAME"/>
    <property type="molecule type" value="Genomic_DNA"/>
</dbReference>
<dbReference type="EMBL" id="AL009126">
    <property type="protein sequence ID" value="CAB13640.3"/>
    <property type="molecule type" value="Genomic_DNA"/>
</dbReference>
<dbReference type="PIR" id="H69887">
    <property type="entry name" value="H69887"/>
</dbReference>
<dbReference type="RefSeq" id="NP_389638.3">
    <property type="nucleotide sequence ID" value="NC_000964.3"/>
</dbReference>
<dbReference type="RefSeq" id="WP_003245403.1">
    <property type="nucleotide sequence ID" value="NZ_OZ025638.1"/>
</dbReference>
<dbReference type="SMR" id="P94487"/>
<dbReference type="FunCoup" id="P94487">
    <property type="interactions" value="21"/>
</dbReference>
<dbReference type="STRING" id="224308.BSU17560"/>
<dbReference type="PaxDb" id="224308-BSU17560"/>
<dbReference type="DNASU" id="940011"/>
<dbReference type="EnsemblBacteria" id="CAB13640">
    <property type="protein sequence ID" value="CAB13640"/>
    <property type="gene ID" value="BSU_17560"/>
</dbReference>
<dbReference type="GeneID" id="940011"/>
<dbReference type="KEGG" id="bsu:BSU17560"/>
<dbReference type="PATRIC" id="fig|224308.179.peg.1906"/>
<dbReference type="eggNOG" id="COG0135">
    <property type="taxonomic scope" value="Bacteria"/>
</dbReference>
<dbReference type="InParanoid" id="P94487"/>
<dbReference type="OrthoDB" id="2139603at2"/>
<dbReference type="BioCyc" id="BSUB:BSU17560-MONOMER"/>
<dbReference type="Proteomes" id="UP000001570">
    <property type="component" value="Chromosome"/>
</dbReference>
<comment type="similarity">
    <text evidence="1">To L.lactis TrpF C-terminal region.</text>
</comment>
<comment type="sequence caution" evidence="1">
    <conflict type="frameshift">
        <sequence resource="EMBL-CDS" id="AAB41088"/>
    </conflict>
</comment>
<proteinExistence type="predicted"/>
<protein>
    <recommendedName>
        <fullName>Uncharacterized protein YnaI</fullName>
    </recommendedName>
</protein>
<organism>
    <name type="scientific">Bacillus subtilis (strain 168)</name>
    <dbReference type="NCBI Taxonomy" id="224308"/>
    <lineage>
        <taxon>Bacteria</taxon>
        <taxon>Bacillati</taxon>
        <taxon>Bacillota</taxon>
        <taxon>Bacilli</taxon>
        <taxon>Bacillales</taxon>
        <taxon>Bacillaceae</taxon>
        <taxon>Bacillus</taxon>
    </lineage>
</organism>
<name>YNAI_BACSU</name>
<feature type="chain" id="PRO_0000049645" description="Uncharacterized protein YnaI">
    <location>
        <begin position="1"/>
        <end position="156"/>
    </location>
</feature>
<feature type="sequence conflict" description="In Ref. 1; AAB41088." evidence="1" ref="1">
    <original>K</original>
    <variation>Q</variation>
    <location>
        <position position="69"/>
    </location>
</feature>
<reference key="1">
    <citation type="submission" date="1997-02" db="EMBL/GenBank/DDBJ databases">
        <title>Sequencing of a 26 kb region of the Bacillus subtilis genome downstream of spoVJ.</title>
        <authorList>
            <person name="Borchert S."/>
            <person name="Klein C."/>
            <person name="Piksa B."/>
            <person name="Hammelmann M."/>
            <person name="Entian K.-D."/>
        </authorList>
    </citation>
    <scope>NUCLEOTIDE SEQUENCE [GENOMIC DNA]</scope>
</reference>
<reference key="2">
    <citation type="journal article" date="1997" name="Nature">
        <title>The complete genome sequence of the Gram-positive bacterium Bacillus subtilis.</title>
        <authorList>
            <person name="Kunst F."/>
            <person name="Ogasawara N."/>
            <person name="Moszer I."/>
            <person name="Albertini A.M."/>
            <person name="Alloni G."/>
            <person name="Azevedo V."/>
            <person name="Bertero M.G."/>
            <person name="Bessieres P."/>
            <person name="Bolotin A."/>
            <person name="Borchert S."/>
            <person name="Borriss R."/>
            <person name="Boursier L."/>
            <person name="Brans A."/>
            <person name="Braun M."/>
            <person name="Brignell S.C."/>
            <person name="Bron S."/>
            <person name="Brouillet S."/>
            <person name="Bruschi C.V."/>
            <person name="Caldwell B."/>
            <person name="Capuano V."/>
            <person name="Carter N.M."/>
            <person name="Choi S.-K."/>
            <person name="Codani J.-J."/>
            <person name="Connerton I.F."/>
            <person name="Cummings N.J."/>
            <person name="Daniel R.A."/>
            <person name="Denizot F."/>
            <person name="Devine K.M."/>
            <person name="Duesterhoeft A."/>
            <person name="Ehrlich S.D."/>
            <person name="Emmerson P.T."/>
            <person name="Entian K.-D."/>
            <person name="Errington J."/>
            <person name="Fabret C."/>
            <person name="Ferrari E."/>
            <person name="Foulger D."/>
            <person name="Fritz C."/>
            <person name="Fujita M."/>
            <person name="Fujita Y."/>
            <person name="Fuma S."/>
            <person name="Galizzi A."/>
            <person name="Galleron N."/>
            <person name="Ghim S.-Y."/>
            <person name="Glaser P."/>
            <person name="Goffeau A."/>
            <person name="Golightly E.J."/>
            <person name="Grandi G."/>
            <person name="Guiseppi G."/>
            <person name="Guy B.J."/>
            <person name="Haga K."/>
            <person name="Haiech J."/>
            <person name="Harwood C.R."/>
            <person name="Henaut A."/>
            <person name="Hilbert H."/>
            <person name="Holsappel S."/>
            <person name="Hosono S."/>
            <person name="Hullo M.-F."/>
            <person name="Itaya M."/>
            <person name="Jones L.-M."/>
            <person name="Joris B."/>
            <person name="Karamata D."/>
            <person name="Kasahara Y."/>
            <person name="Klaerr-Blanchard M."/>
            <person name="Klein C."/>
            <person name="Kobayashi Y."/>
            <person name="Koetter P."/>
            <person name="Koningstein G."/>
            <person name="Krogh S."/>
            <person name="Kumano M."/>
            <person name="Kurita K."/>
            <person name="Lapidus A."/>
            <person name="Lardinois S."/>
            <person name="Lauber J."/>
            <person name="Lazarevic V."/>
            <person name="Lee S.-M."/>
            <person name="Levine A."/>
            <person name="Liu H."/>
            <person name="Masuda S."/>
            <person name="Mauel C."/>
            <person name="Medigue C."/>
            <person name="Medina N."/>
            <person name="Mellado R.P."/>
            <person name="Mizuno M."/>
            <person name="Moestl D."/>
            <person name="Nakai S."/>
            <person name="Noback M."/>
            <person name="Noone D."/>
            <person name="O'Reilly M."/>
            <person name="Ogawa K."/>
            <person name="Ogiwara A."/>
            <person name="Oudega B."/>
            <person name="Park S.-H."/>
            <person name="Parro V."/>
            <person name="Pohl T.M."/>
            <person name="Portetelle D."/>
            <person name="Porwollik S."/>
            <person name="Prescott A.M."/>
            <person name="Presecan E."/>
            <person name="Pujic P."/>
            <person name="Purnelle B."/>
            <person name="Rapoport G."/>
            <person name="Rey M."/>
            <person name="Reynolds S."/>
            <person name="Rieger M."/>
            <person name="Rivolta C."/>
            <person name="Rocha E."/>
            <person name="Roche B."/>
            <person name="Rose M."/>
            <person name="Sadaie Y."/>
            <person name="Sato T."/>
            <person name="Scanlan E."/>
            <person name="Schleich S."/>
            <person name="Schroeter R."/>
            <person name="Scoffone F."/>
            <person name="Sekiguchi J."/>
            <person name="Sekowska A."/>
            <person name="Seror S.J."/>
            <person name="Serror P."/>
            <person name="Shin B.-S."/>
            <person name="Soldo B."/>
            <person name="Sorokin A."/>
            <person name="Tacconi E."/>
            <person name="Takagi T."/>
            <person name="Takahashi H."/>
            <person name="Takemaru K."/>
            <person name="Takeuchi M."/>
            <person name="Tamakoshi A."/>
            <person name="Tanaka T."/>
            <person name="Terpstra P."/>
            <person name="Tognoni A."/>
            <person name="Tosato V."/>
            <person name="Uchiyama S."/>
            <person name="Vandenbol M."/>
            <person name="Vannier F."/>
            <person name="Vassarotti A."/>
            <person name="Viari A."/>
            <person name="Wambutt R."/>
            <person name="Wedler E."/>
            <person name="Wedler H."/>
            <person name="Weitzenegger T."/>
            <person name="Winters P."/>
            <person name="Wipat A."/>
            <person name="Yamamoto H."/>
            <person name="Yamane K."/>
            <person name="Yasumoto K."/>
            <person name="Yata K."/>
            <person name="Yoshida K."/>
            <person name="Yoshikawa H.-F."/>
            <person name="Zumstein E."/>
            <person name="Yoshikawa H."/>
            <person name="Danchin A."/>
        </authorList>
    </citation>
    <scope>NUCLEOTIDE SEQUENCE [LARGE SCALE GENOMIC DNA]</scope>
    <source>
        <strain>168</strain>
    </source>
</reference>
<reference key="3">
    <citation type="journal article" date="1999" name="Genome Res.">
        <title>Detecting and analyzing DNA sequencing errors: toward a higher quality of the Bacillus subtilis genome sequence.</title>
        <authorList>
            <person name="Medigue C."/>
            <person name="Rose M."/>
            <person name="Viari A."/>
            <person name="Danchin A."/>
        </authorList>
    </citation>
    <scope>SEQUENCE REVISION</scope>
</reference>
<reference key="4">
    <citation type="journal article" date="2009" name="Microbiology">
        <title>From a consortium sequence to a unified sequence: the Bacillus subtilis 168 reference genome a decade later.</title>
        <authorList>
            <person name="Barbe V."/>
            <person name="Cruveiller S."/>
            <person name="Kunst F."/>
            <person name="Lenoble P."/>
            <person name="Meurice G."/>
            <person name="Sekowska A."/>
            <person name="Vallenet D."/>
            <person name="Wang T."/>
            <person name="Moszer I."/>
            <person name="Medigue C."/>
            <person name="Danchin A."/>
        </authorList>
    </citation>
    <scope>SEQUENCE REVISION TO 69</scope>
</reference>
<evidence type="ECO:0000305" key="1"/>